<name>GAGE7_HUMAN</name>
<feature type="chain" id="PRO_0000148345" description="G antigen 7">
    <location>
        <begin position="1"/>
        <end position="117"/>
    </location>
</feature>
<feature type="region of interest" description="Disordered" evidence="1">
    <location>
        <begin position="1"/>
        <end position="117"/>
    </location>
</feature>
<feature type="compositionally biased region" description="Acidic residues" evidence="1">
    <location>
        <begin position="32"/>
        <end position="45"/>
    </location>
</feature>
<feature type="compositionally biased region" description="Acidic residues" evidence="1">
    <location>
        <begin position="87"/>
        <end position="96"/>
    </location>
</feature>
<feature type="compositionally biased region" description="Basic and acidic residues" evidence="1">
    <location>
        <begin position="103"/>
        <end position="117"/>
    </location>
</feature>
<evidence type="ECO:0000256" key="1">
    <source>
        <dbReference type="SAM" id="MobiDB-lite"/>
    </source>
</evidence>
<evidence type="ECO:0000305" key="2"/>
<dbReference type="EMBL" id="AF058988">
    <property type="protein sequence ID" value="AAC25989.1"/>
    <property type="molecule type" value="mRNA"/>
</dbReference>
<dbReference type="EMBL" id="AF055474">
    <property type="protein sequence ID" value="AAC33677.1"/>
    <property type="molecule type" value="mRNA"/>
</dbReference>
<dbReference type="EMBL" id="AF055475">
    <property type="protein sequence ID" value="AAC33678.1"/>
    <property type="molecule type" value="Genomic_DNA"/>
</dbReference>
<dbReference type="EMBL" id="BX649339">
    <property type="protein sequence ID" value="CAI95423.1"/>
    <property type="molecule type" value="Genomic_DNA"/>
</dbReference>
<dbReference type="EMBL" id="BC031628">
    <property type="protein sequence ID" value="AAH31628.1"/>
    <property type="molecule type" value="mRNA"/>
</dbReference>
<dbReference type="EMBL" id="BC104951">
    <property type="protein sequence ID" value="AAI04952.1"/>
    <property type="molecule type" value="mRNA"/>
</dbReference>
<dbReference type="EMBL" id="BC121182">
    <property type="protein sequence ID" value="AAI21183.1"/>
    <property type="molecule type" value="mRNA"/>
</dbReference>
<dbReference type="EMBL" id="BC121183">
    <property type="protein sequence ID" value="AAI21184.1"/>
    <property type="molecule type" value="mRNA"/>
</dbReference>
<dbReference type="EMBL" id="BC144193">
    <property type="protein sequence ID" value="AAI44194.1"/>
    <property type="molecule type" value="mRNA"/>
</dbReference>
<dbReference type="RefSeq" id="NP_001120817.1">
    <property type="nucleotide sequence ID" value="NM_001127345.1"/>
</dbReference>
<dbReference type="RefSeq" id="NP_001468.1">
    <property type="nucleotide sequence ID" value="NM_001477.1"/>
</dbReference>
<dbReference type="RefSeq" id="NP_066946.1">
    <property type="nucleotide sequence ID" value="NM_021123.3"/>
</dbReference>
<dbReference type="BioGRID" id="108852">
    <property type="interactions" value="1"/>
</dbReference>
<dbReference type="BioGRID" id="117808">
    <property type="interactions" value="3"/>
</dbReference>
<dbReference type="BioGRID" id="570130">
    <property type="interactions" value="6"/>
</dbReference>
<dbReference type="BioGRID" id="755635">
    <property type="interactions" value="1"/>
</dbReference>
<dbReference type="FunCoup" id="O76087">
    <property type="interactions" value="2"/>
</dbReference>
<dbReference type="IntAct" id="O76087">
    <property type="interactions" value="1"/>
</dbReference>
<dbReference type="iPTMnet" id="O76087"/>
<dbReference type="PhosphoSitePlus" id="O76087"/>
<dbReference type="BioMuta" id="HGNC:4104"/>
<dbReference type="jPOST" id="O76087"/>
<dbReference type="MassIVE" id="O76087"/>
<dbReference type="PaxDb" id="9606-ENSP00000404123"/>
<dbReference type="Pumba" id="O76087"/>
<dbReference type="TopDownProteomics" id="O76087"/>
<dbReference type="Antibodypedia" id="64945">
    <property type="antibodies" value="132 antibodies from 20 providers"/>
</dbReference>
<dbReference type="Antibodypedia" id="70742">
    <property type="antibodies" value="15 antibodies from 7 providers"/>
</dbReference>
<dbReference type="DNASU" id="729428"/>
<dbReference type="GeneID" id="100008586"/>
<dbReference type="GeneID" id="2579"/>
<dbReference type="GeneID" id="26748"/>
<dbReference type="KEGG" id="hsa:100008586"/>
<dbReference type="KEGG" id="hsa:2579"/>
<dbReference type="KEGG" id="hsa:26748"/>
<dbReference type="KEGG" id="hsa:645073"/>
<dbReference type="KEGG" id="hsa:729428"/>
<dbReference type="AGR" id="HGNC:26779"/>
<dbReference type="AGR" id="HGNC:31906"/>
<dbReference type="AGR" id="HGNC:31907"/>
<dbReference type="AGR" id="HGNC:4104"/>
<dbReference type="AGR" id="HGNC:4105"/>
<dbReference type="CTD" id="100008586"/>
<dbReference type="CTD" id="2579"/>
<dbReference type="CTD" id="26748"/>
<dbReference type="CTD" id="645073"/>
<dbReference type="CTD" id="729428"/>
<dbReference type="DisGeNET" id="100008586"/>
<dbReference type="DisGeNET" id="2579"/>
<dbReference type="DisGeNET" id="26748"/>
<dbReference type="DisGeNET" id="645073"/>
<dbReference type="DisGeNET" id="729428"/>
<dbReference type="GeneCards" id="GAGE7"/>
<dbReference type="HGNC" id="HGNC:4104">
    <property type="gene designation" value="GAGE7"/>
</dbReference>
<dbReference type="HPA" id="ENSG00000215269">
    <property type="expression patterns" value="Tissue enriched (testis)"/>
</dbReference>
<dbReference type="HPA" id="ENSG00000236362">
    <property type="expression patterns" value="Tissue enriched (testis)"/>
</dbReference>
<dbReference type="MIM" id="300601">
    <property type="type" value="gene"/>
</dbReference>
<dbReference type="MIM" id="300637">
    <property type="type" value="gene"/>
</dbReference>
<dbReference type="neXtProt" id="NX_O76087"/>
<dbReference type="PharmGKB" id="PA145148778"/>
<dbReference type="VEuPathDB" id="HostDB:ENSG00000215269"/>
<dbReference type="VEuPathDB" id="HostDB:ENSG00000236362"/>
<dbReference type="eggNOG" id="ENOG502SZ68">
    <property type="taxonomic scope" value="Eukaryota"/>
</dbReference>
<dbReference type="HOGENOM" id="CLU_150116_0_0_1"/>
<dbReference type="InParanoid" id="O76087"/>
<dbReference type="OrthoDB" id="9539459at2759"/>
<dbReference type="PAN-GO" id="O76087">
    <property type="GO annotations" value="0 GO annotations based on evolutionary models"/>
</dbReference>
<dbReference type="PhylomeDB" id="O76087"/>
<dbReference type="PathwayCommons" id="O76087"/>
<dbReference type="BioGRID-ORCS" id="100008586">
    <property type="hits" value="3 hits in 66 CRISPR screens"/>
</dbReference>
<dbReference type="BioGRID-ORCS" id="2579">
    <property type="hits" value="3 hits in 26 CRISPR screens"/>
</dbReference>
<dbReference type="BioGRID-ORCS" id="26748">
    <property type="hits" value="4 hits in 125 CRISPR screens"/>
</dbReference>
<dbReference type="BioGRID-ORCS" id="645073">
    <property type="hits" value="4 hits in 38 CRISPR screens"/>
</dbReference>
<dbReference type="Pharos" id="O76087">
    <property type="development level" value="Tbio"/>
</dbReference>
<dbReference type="PRO" id="PR:O76087"/>
<dbReference type="Proteomes" id="UP000005640">
    <property type="component" value="Unplaced"/>
</dbReference>
<dbReference type="RNAct" id="O76087">
    <property type="molecule type" value="protein"/>
</dbReference>
<dbReference type="ExpressionAtlas" id="O76087">
    <property type="expression patterns" value="baseline"/>
</dbReference>
<dbReference type="InterPro" id="IPR031320">
    <property type="entry name" value="GAGE"/>
</dbReference>
<dbReference type="InterPro" id="IPR008625">
    <property type="entry name" value="GAGE_fam"/>
</dbReference>
<dbReference type="PANTHER" id="PTHR14047:SF30">
    <property type="entry name" value="G ANTIGEN 1-RELATED"/>
    <property type="match status" value="1"/>
</dbReference>
<dbReference type="PANTHER" id="PTHR14047">
    <property type="entry name" value="P ANTIGEN FAMILY MEMBER 5-RELATED"/>
    <property type="match status" value="1"/>
</dbReference>
<dbReference type="Pfam" id="PF05831">
    <property type="entry name" value="GAGE"/>
    <property type="match status" value="1"/>
</dbReference>
<dbReference type="SMART" id="SM01379">
    <property type="entry name" value="GAGE"/>
    <property type="match status" value="1"/>
</dbReference>
<proteinExistence type="evidence at transcript level"/>
<comment type="tissue specificity">
    <text>Expressed in some prostate cancer tissues but not in normal prostate tissue.</text>
</comment>
<comment type="miscellaneous">
    <text>This gene belongs to a family of genes organized in clustered repeats. They have a high degree of predicted sequence identity, but differ by scattered single nucleotide substitution. Their sequences contain either the antigenic peptide YYWPRPRRY or YRPRPRRY which is recognized by cytotoxic T-cells.</text>
</comment>
<comment type="similarity">
    <text evidence="2">Belongs to the GAGE family.</text>
</comment>
<comment type="caution">
    <text evidence="2">The first GAGE nomenclature was based on identified mRNA sequences, but the high identity of the GAGE members made impossible to separate products of paralogous genes from polymorph products. PubMed:18179644 presented a new GAGE gene nomenclature based on the identified genes and their products.</text>
</comment>
<keyword id="KW-1185">Reference proteome</keyword>
<sequence>MSWRGRSTYYWPRPRRYVQPPEMIGPMRPEQFSDEVEPATPEEGEPATQRQDPAAAQEGEDEGASAGQGPKPEAHSQEQGHPQTGCECEDGPDGQEMDPPNPEEVKTPEEGEKQSQC</sequence>
<gene>
    <name type="primary">GAGE7</name>
    <name type="synonym">GAGE12I</name>
    <name type="synonym">GAGE7B</name>
</gene>
<reference key="1">
    <citation type="journal article" date="1998" name="J. Biol. Chem.">
        <title>Isolation and characterization of PAGE-1 and GAGE-7: new genes expressed in the LNCaP prostate cancer progression model that share homology with melanoma-associated antigens.</title>
        <authorList>
            <person name="Chen M.E."/>
            <person name="Lin S.-H."/>
            <person name="Chung L.W.K."/>
            <person name="Sikes R.A."/>
        </authorList>
    </citation>
    <scope>NUCLEOTIDE SEQUENCE [MRNA]</scope>
</reference>
<reference key="2">
    <citation type="journal article" date="1999" name="Cancer Res.">
        <title>Characterization of the GAGE genes that are expressed in various human cancers and in normal testis.</title>
        <authorList>
            <person name="De Backer O."/>
            <person name="Arden K.C."/>
            <person name="Boretti M."/>
            <person name="Vantomme V."/>
            <person name="De Smet C."/>
            <person name="Czekay S."/>
            <person name="Viars C.S."/>
            <person name="De Plaen E."/>
            <person name="Brasseur F."/>
            <person name="Chomez P."/>
            <person name="Van den Eynde B."/>
            <person name="Boon T."/>
            <person name="van der Bruggen P."/>
        </authorList>
    </citation>
    <scope>NUCLEOTIDE SEQUENCE [GENOMIC DNA / MRNA]</scope>
</reference>
<reference key="3">
    <citation type="journal article" date="2005" name="Nature">
        <title>The DNA sequence of the human X chromosome.</title>
        <authorList>
            <person name="Ross M.T."/>
            <person name="Grafham D.V."/>
            <person name="Coffey A.J."/>
            <person name="Scherer S."/>
            <person name="McLay K."/>
            <person name="Muzny D."/>
            <person name="Platzer M."/>
            <person name="Howell G.R."/>
            <person name="Burrows C."/>
            <person name="Bird C.P."/>
            <person name="Frankish A."/>
            <person name="Lovell F.L."/>
            <person name="Howe K.L."/>
            <person name="Ashurst J.L."/>
            <person name="Fulton R.S."/>
            <person name="Sudbrak R."/>
            <person name="Wen G."/>
            <person name="Jones M.C."/>
            <person name="Hurles M.E."/>
            <person name="Andrews T.D."/>
            <person name="Scott C.E."/>
            <person name="Searle S."/>
            <person name="Ramser J."/>
            <person name="Whittaker A."/>
            <person name="Deadman R."/>
            <person name="Carter N.P."/>
            <person name="Hunt S.E."/>
            <person name="Chen R."/>
            <person name="Cree A."/>
            <person name="Gunaratne P."/>
            <person name="Havlak P."/>
            <person name="Hodgson A."/>
            <person name="Metzker M.L."/>
            <person name="Richards S."/>
            <person name="Scott G."/>
            <person name="Steffen D."/>
            <person name="Sodergren E."/>
            <person name="Wheeler D.A."/>
            <person name="Worley K.C."/>
            <person name="Ainscough R."/>
            <person name="Ambrose K.D."/>
            <person name="Ansari-Lari M.A."/>
            <person name="Aradhya S."/>
            <person name="Ashwell R.I."/>
            <person name="Babbage A.K."/>
            <person name="Bagguley C.L."/>
            <person name="Ballabio A."/>
            <person name="Banerjee R."/>
            <person name="Barker G.E."/>
            <person name="Barlow K.F."/>
            <person name="Barrett I.P."/>
            <person name="Bates K.N."/>
            <person name="Beare D.M."/>
            <person name="Beasley H."/>
            <person name="Beasley O."/>
            <person name="Beck A."/>
            <person name="Bethel G."/>
            <person name="Blechschmidt K."/>
            <person name="Brady N."/>
            <person name="Bray-Allen S."/>
            <person name="Bridgeman A.M."/>
            <person name="Brown A.J."/>
            <person name="Brown M.J."/>
            <person name="Bonnin D."/>
            <person name="Bruford E.A."/>
            <person name="Buhay C."/>
            <person name="Burch P."/>
            <person name="Burford D."/>
            <person name="Burgess J."/>
            <person name="Burrill W."/>
            <person name="Burton J."/>
            <person name="Bye J.M."/>
            <person name="Carder C."/>
            <person name="Carrel L."/>
            <person name="Chako J."/>
            <person name="Chapman J.C."/>
            <person name="Chavez D."/>
            <person name="Chen E."/>
            <person name="Chen G."/>
            <person name="Chen Y."/>
            <person name="Chen Z."/>
            <person name="Chinault C."/>
            <person name="Ciccodicola A."/>
            <person name="Clark S.Y."/>
            <person name="Clarke G."/>
            <person name="Clee C.M."/>
            <person name="Clegg S."/>
            <person name="Clerc-Blankenburg K."/>
            <person name="Clifford K."/>
            <person name="Cobley V."/>
            <person name="Cole C.G."/>
            <person name="Conquer J.S."/>
            <person name="Corby N."/>
            <person name="Connor R.E."/>
            <person name="David R."/>
            <person name="Davies J."/>
            <person name="Davis C."/>
            <person name="Davis J."/>
            <person name="Delgado O."/>
            <person name="Deshazo D."/>
            <person name="Dhami P."/>
            <person name="Ding Y."/>
            <person name="Dinh H."/>
            <person name="Dodsworth S."/>
            <person name="Draper H."/>
            <person name="Dugan-Rocha S."/>
            <person name="Dunham A."/>
            <person name="Dunn M."/>
            <person name="Durbin K.J."/>
            <person name="Dutta I."/>
            <person name="Eades T."/>
            <person name="Ellwood M."/>
            <person name="Emery-Cohen A."/>
            <person name="Errington H."/>
            <person name="Evans K.L."/>
            <person name="Faulkner L."/>
            <person name="Francis F."/>
            <person name="Frankland J."/>
            <person name="Fraser A.E."/>
            <person name="Galgoczy P."/>
            <person name="Gilbert J."/>
            <person name="Gill R."/>
            <person name="Gloeckner G."/>
            <person name="Gregory S.G."/>
            <person name="Gribble S."/>
            <person name="Griffiths C."/>
            <person name="Grocock R."/>
            <person name="Gu Y."/>
            <person name="Gwilliam R."/>
            <person name="Hamilton C."/>
            <person name="Hart E.A."/>
            <person name="Hawes A."/>
            <person name="Heath P.D."/>
            <person name="Heitmann K."/>
            <person name="Hennig S."/>
            <person name="Hernandez J."/>
            <person name="Hinzmann B."/>
            <person name="Ho S."/>
            <person name="Hoffs M."/>
            <person name="Howden P.J."/>
            <person name="Huckle E.J."/>
            <person name="Hume J."/>
            <person name="Hunt P.J."/>
            <person name="Hunt A.R."/>
            <person name="Isherwood J."/>
            <person name="Jacob L."/>
            <person name="Johnson D."/>
            <person name="Jones S."/>
            <person name="de Jong P.J."/>
            <person name="Joseph S.S."/>
            <person name="Keenan S."/>
            <person name="Kelly S."/>
            <person name="Kershaw J.K."/>
            <person name="Khan Z."/>
            <person name="Kioschis P."/>
            <person name="Klages S."/>
            <person name="Knights A.J."/>
            <person name="Kosiura A."/>
            <person name="Kovar-Smith C."/>
            <person name="Laird G.K."/>
            <person name="Langford C."/>
            <person name="Lawlor S."/>
            <person name="Leversha M."/>
            <person name="Lewis L."/>
            <person name="Liu W."/>
            <person name="Lloyd C."/>
            <person name="Lloyd D.M."/>
            <person name="Loulseged H."/>
            <person name="Loveland J.E."/>
            <person name="Lovell J.D."/>
            <person name="Lozado R."/>
            <person name="Lu J."/>
            <person name="Lyne R."/>
            <person name="Ma J."/>
            <person name="Maheshwari M."/>
            <person name="Matthews L.H."/>
            <person name="McDowall J."/>
            <person name="McLaren S."/>
            <person name="McMurray A."/>
            <person name="Meidl P."/>
            <person name="Meitinger T."/>
            <person name="Milne S."/>
            <person name="Miner G."/>
            <person name="Mistry S.L."/>
            <person name="Morgan M."/>
            <person name="Morris S."/>
            <person name="Mueller I."/>
            <person name="Mullikin J.C."/>
            <person name="Nguyen N."/>
            <person name="Nordsiek G."/>
            <person name="Nyakatura G."/>
            <person name="O'dell C.N."/>
            <person name="Okwuonu G."/>
            <person name="Palmer S."/>
            <person name="Pandian R."/>
            <person name="Parker D."/>
            <person name="Parrish J."/>
            <person name="Pasternak S."/>
            <person name="Patel D."/>
            <person name="Pearce A.V."/>
            <person name="Pearson D.M."/>
            <person name="Pelan S.E."/>
            <person name="Perez L."/>
            <person name="Porter K.M."/>
            <person name="Ramsey Y."/>
            <person name="Reichwald K."/>
            <person name="Rhodes S."/>
            <person name="Ridler K.A."/>
            <person name="Schlessinger D."/>
            <person name="Schueler M.G."/>
            <person name="Sehra H.K."/>
            <person name="Shaw-Smith C."/>
            <person name="Shen H."/>
            <person name="Sheridan E.M."/>
            <person name="Shownkeen R."/>
            <person name="Skuce C.D."/>
            <person name="Smith M.L."/>
            <person name="Sotheran E.C."/>
            <person name="Steingruber H.E."/>
            <person name="Steward C.A."/>
            <person name="Storey R."/>
            <person name="Swann R.M."/>
            <person name="Swarbreck D."/>
            <person name="Tabor P.E."/>
            <person name="Taudien S."/>
            <person name="Taylor T."/>
            <person name="Teague B."/>
            <person name="Thomas K."/>
            <person name="Thorpe A."/>
            <person name="Timms K."/>
            <person name="Tracey A."/>
            <person name="Trevanion S."/>
            <person name="Tromans A.C."/>
            <person name="d'Urso M."/>
            <person name="Verduzco D."/>
            <person name="Villasana D."/>
            <person name="Waldron L."/>
            <person name="Wall M."/>
            <person name="Wang Q."/>
            <person name="Warren J."/>
            <person name="Warry G.L."/>
            <person name="Wei X."/>
            <person name="West A."/>
            <person name="Whitehead S.L."/>
            <person name="Whiteley M.N."/>
            <person name="Wilkinson J.E."/>
            <person name="Willey D.L."/>
            <person name="Williams G."/>
            <person name="Williams L."/>
            <person name="Williamson A."/>
            <person name="Williamson H."/>
            <person name="Wilming L."/>
            <person name="Woodmansey R.L."/>
            <person name="Wray P.W."/>
            <person name="Yen J."/>
            <person name="Zhang J."/>
            <person name="Zhou J."/>
            <person name="Zoghbi H."/>
            <person name="Zorilla S."/>
            <person name="Buck D."/>
            <person name="Reinhardt R."/>
            <person name="Poustka A."/>
            <person name="Rosenthal A."/>
            <person name="Lehrach H."/>
            <person name="Meindl A."/>
            <person name="Minx P.J."/>
            <person name="Hillier L.W."/>
            <person name="Willard H.F."/>
            <person name="Wilson R.K."/>
            <person name="Waterston R.H."/>
            <person name="Rice C.M."/>
            <person name="Vaudin M."/>
            <person name="Coulson A."/>
            <person name="Nelson D.L."/>
            <person name="Weinstock G."/>
            <person name="Sulston J.E."/>
            <person name="Durbin R.M."/>
            <person name="Hubbard T."/>
            <person name="Gibbs R.A."/>
            <person name="Beck S."/>
            <person name="Rogers J."/>
            <person name="Bentley D.R."/>
        </authorList>
    </citation>
    <scope>NUCLEOTIDE SEQUENCE [LARGE SCALE GENOMIC DNA]</scope>
</reference>
<reference key="4">
    <citation type="journal article" date="2004" name="Genome Res.">
        <title>The status, quality, and expansion of the NIH full-length cDNA project: the Mammalian Gene Collection (MGC).</title>
        <authorList>
            <consortium name="The MGC Project Team"/>
        </authorList>
    </citation>
    <scope>NUCLEOTIDE SEQUENCE [LARGE SCALE MRNA]</scope>
    <source>
        <tissue>Brain</tissue>
    </source>
</reference>
<reference key="5">
    <citation type="journal article" date="2008" name="Tissue Antigens">
        <title>An overview of the GAGE cancer/testis antigen family with the inclusion of newly identified members.</title>
        <authorList>
            <person name="Gjerstorff M.F."/>
            <person name="Ditzel H.J."/>
        </authorList>
    </citation>
    <scope>GAGE FAMILY</scope>
</reference>
<accession>O76087</accession>
<accession>B7ZM13</accession>
<accession>Q4V324</accession>
<organism>
    <name type="scientific">Homo sapiens</name>
    <name type="common">Human</name>
    <dbReference type="NCBI Taxonomy" id="9606"/>
    <lineage>
        <taxon>Eukaryota</taxon>
        <taxon>Metazoa</taxon>
        <taxon>Chordata</taxon>
        <taxon>Craniata</taxon>
        <taxon>Vertebrata</taxon>
        <taxon>Euteleostomi</taxon>
        <taxon>Mammalia</taxon>
        <taxon>Eutheria</taxon>
        <taxon>Euarchontoglires</taxon>
        <taxon>Primates</taxon>
        <taxon>Haplorrhini</taxon>
        <taxon>Catarrhini</taxon>
        <taxon>Hominidae</taxon>
        <taxon>Homo</taxon>
    </lineage>
</organism>
<protein>
    <recommendedName>
        <fullName>G antigen 7</fullName>
        <shortName>GAGE-7</shortName>
    </recommendedName>
    <alternativeName>
        <fullName>AL4</fullName>
    </alternativeName>
    <alternativeName>
        <fullName>Cancer/testis antigen 4.7</fullName>
        <shortName>CT4.7</shortName>
    </alternativeName>
    <alternativeName>
        <fullName>GAGE-12I</fullName>
    </alternativeName>
    <alternativeName>
        <fullName>GAGE-7B</fullName>
    </alternativeName>
    <alternativeName>
        <fullName>GAGE-8</fullName>
    </alternativeName>
</protein>